<gene>
    <name evidence="1" type="primary">truB</name>
    <name type="ordered locus">SGO_1049</name>
</gene>
<protein>
    <recommendedName>
        <fullName evidence="1">tRNA pseudouridine synthase B</fullName>
        <ecNumber evidence="1">5.4.99.25</ecNumber>
    </recommendedName>
    <alternativeName>
        <fullName evidence="1">tRNA pseudouridine(55) synthase</fullName>
        <shortName evidence="1">Psi55 synthase</shortName>
    </alternativeName>
    <alternativeName>
        <fullName evidence="1">tRNA pseudouridylate synthase</fullName>
    </alternativeName>
    <alternativeName>
        <fullName evidence="1">tRNA-uridine isomerase</fullName>
    </alternativeName>
</protein>
<dbReference type="EC" id="5.4.99.25" evidence="1"/>
<dbReference type="EMBL" id="CP000725">
    <property type="protein sequence ID" value="ABV10772.1"/>
    <property type="molecule type" value="Genomic_DNA"/>
</dbReference>
<dbReference type="RefSeq" id="WP_012000462.1">
    <property type="nucleotide sequence ID" value="NC_009785.1"/>
</dbReference>
<dbReference type="SMR" id="A8AX28"/>
<dbReference type="STRING" id="467705.SGO_1049"/>
<dbReference type="KEGG" id="sgo:SGO_1049"/>
<dbReference type="eggNOG" id="COG0130">
    <property type="taxonomic scope" value="Bacteria"/>
</dbReference>
<dbReference type="HOGENOM" id="CLU_032087_0_1_9"/>
<dbReference type="Proteomes" id="UP000001131">
    <property type="component" value="Chromosome"/>
</dbReference>
<dbReference type="GO" id="GO:0003723">
    <property type="term" value="F:RNA binding"/>
    <property type="evidence" value="ECO:0007669"/>
    <property type="project" value="InterPro"/>
</dbReference>
<dbReference type="GO" id="GO:0160148">
    <property type="term" value="F:tRNA pseudouridine(55) synthase activity"/>
    <property type="evidence" value="ECO:0007669"/>
    <property type="project" value="UniProtKB-EC"/>
</dbReference>
<dbReference type="GO" id="GO:1990481">
    <property type="term" value="P:mRNA pseudouridine synthesis"/>
    <property type="evidence" value="ECO:0007669"/>
    <property type="project" value="TreeGrafter"/>
</dbReference>
<dbReference type="GO" id="GO:0031119">
    <property type="term" value="P:tRNA pseudouridine synthesis"/>
    <property type="evidence" value="ECO:0007669"/>
    <property type="project" value="UniProtKB-UniRule"/>
</dbReference>
<dbReference type="CDD" id="cd02573">
    <property type="entry name" value="PseudoU_synth_EcTruB"/>
    <property type="match status" value="1"/>
</dbReference>
<dbReference type="FunFam" id="3.30.2350.10:FF:000011">
    <property type="entry name" value="tRNA pseudouridine synthase B"/>
    <property type="match status" value="1"/>
</dbReference>
<dbReference type="Gene3D" id="3.30.2350.10">
    <property type="entry name" value="Pseudouridine synthase"/>
    <property type="match status" value="1"/>
</dbReference>
<dbReference type="HAMAP" id="MF_01080">
    <property type="entry name" value="TruB_bact"/>
    <property type="match status" value="1"/>
</dbReference>
<dbReference type="InterPro" id="IPR020103">
    <property type="entry name" value="PsdUridine_synth_cat_dom_sf"/>
</dbReference>
<dbReference type="InterPro" id="IPR002501">
    <property type="entry name" value="PsdUridine_synth_N"/>
</dbReference>
<dbReference type="InterPro" id="IPR014780">
    <property type="entry name" value="tRNA_psdUridine_synth_TruB"/>
</dbReference>
<dbReference type="InterPro" id="IPR032819">
    <property type="entry name" value="TruB_C"/>
</dbReference>
<dbReference type="NCBIfam" id="TIGR00431">
    <property type="entry name" value="TruB"/>
    <property type="match status" value="1"/>
</dbReference>
<dbReference type="PANTHER" id="PTHR13767:SF2">
    <property type="entry name" value="PSEUDOURIDYLATE SYNTHASE TRUB1"/>
    <property type="match status" value="1"/>
</dbReference>
<dbReference type="PANTHER" id="PTHR13767">
    <property type="entry name" value="TRNA-PSEUDOURIDINE SYNTHASE"/>
    <property type="match status" value="1"/>
</dbReference>
<dbReference type="Pfam" id="PF16198">
    <property type="entry name" value="TruB_C_2"/>
    <property type="match status" value="1"/>
</dbReference>
<dbReference type="Pfam" id="PF01509">
    <property type="entry name" value="TruB_N"/>
    <property type="match status" value="1"/>
</dbReference>
<dbReference type="SUPFAM" id="SSF55120">
    <property type="entry name" value="Pseudouridine synthase"/>
    <property type="match status" value="1"/>
</dbReference>
<reference key="1">
    <citation type="journal article" date="2007" name="J. Bacteriol.">
        <title>Genome-wide transcriptional changes in Streptococcus gordonii in response to competence signaling peptide.</title>
        <authorList>
            <person name="Vickerman M.M."/>
            <person name="Iobst S."/>
            <person name="Jesionowski A.M."/>
            <person name="Gill S.R."/>
        </authorList>
    </citation>
    <scope>NUCLEOTIDE SEQUENCE [LARGE SCALE GENOMIC DNA]</scope>
    <source>
        <strain>Challis / ATCC 35105 / BCRC 15272 / CH1 / DL1 / V288</strain>
    </source>
</reference>
<accession>A8AX28</accession>
<sequence>MNGIINLKKEAGMTSHDAVFKLRKILGTKKIGHGGTLDPDVVGVLPIAVGKATRMVEFMQDEGKVYEGEITLGYSTTTEDASGEVVAETPVLSPLDEKLVDEAIASLTGPITQIPPMYSAVKVNGRKLYEYARAGQEVKRPERQVTIYQFERTSPISYEGQLARFTFRVKCSKGTYIRTLSVDLGEKLGYAAHMSHLTRTSAAGMRLGDALTLEQIAERVAEEDYSFLQPLELGIGDLLKVELSDEQVEDVRNGRFISLVSDEAELAGFYGEKLVTILEKRKDQFKPRKVFL</sequence>
<organism>
    <name type="scientific">Streptococcus gordonii (strain Challis / ATCC 35105 / BCRC 15272 / CH1 / DL1 / V288)</name>
    <dbReference type="NCBI Taxonomy" id="467705"/>
    <lineage>
        <taxon>Bacteria</taxon>
        <taxon>Bacillati</taxon>
        <taxon>Bacillota</taxon>
        <taxon>Bacilli</taxon>
        <taxon>Lactobacillales</taxon>
        <taxon>Streptococcaceae</taxon>
        <taxon>Streptococcus</taxon>
    </lineage>
</organism>
<proteinExistence type="inferred from homology"/>
<keyword id="KW-0413">Isomerase</keyword>
<keyword id="KW-1185">Reference proteome</keyword>
<keyword id="KW-0819">tRNA processing</keyword>
<evidence type="ECO:0000255" key="1">
    <source>
        <dbReference type="HAMAP-Rule" id="MF_01080"/>
    </source>
</evidence>
<comment type="function">
    <text evidence="1">Responsible for synthesis of pseudouridine from uracil-55 in the psi GC loop of transfer RNAs.</text>
</comment>
<comment type="catalytic activity">
    <reaction evidence="1">
        <text>uridine(55) in tRNA = pseudouridine(55) in tRNA</text>
        <dbReference type="Rhea" id="RHEA:42532"/>
        <dbReference type="Rhea" id="RHEA-COMP:10101"/>
        <dbReference type="Rhea" id="RHEA-COMP:10102"/>
        <dbReference type="ChEBI" id="CHEBI:65314"/>
        <dbReference type="ChEBI" id="CHEBI:65315"/>
        <dbReference type="EC" id="5.4.99.25"/>
    </reaction>
</comment>
<comment type="similarity">
    <text evidence="1">Belongs to the pseudouridine synthase TruB family. Type 1 subfamily.</text>
</comment>
<feature type="chain" id="PRO_1000084695" description="tRNA pseudouridine synthase B">
    <location>
        <begin position="1"/>
        <end position="292"/>
    </location>
</feature>
<feature type="active site" description="Nucleophile" evidence="1">
    <location>
        <position position="38"/>
    </location>
</feature>
<name>TRUB_STRGC</name>